<reference key="1">
    <citation type="submission" date="2006-08" db="EMBL/GenBank/DDBJ databases">
        <authorList>
            <consortium name="NIH - Mammalian Gene Collection (MGC) project"/>
        </authorList>
    </citation>
    <scope>NUCLEOTIDE SEQUENCE [LARGE SCALE MRNA]</scope>
    <source>
        <strain>Hereford</strain>
        <tissue>Fetal liver</tissue>
    </source>
</reference>
<sequence length="319" mass="36673">MANQLRERHQSLKKKYRELIDGDPSLPPEKRKQANLAQLLRDSQDRNKHLGEEIKELQQRLGEVQGDNKLLRMTIAKQRLGDEEIGVRHFAAHEREDLVQQLERAKEQIESLEHDLQASVDELQDVKEERSSYQDKVERLNQELNHILSGHENRIIDVDALCMENRYLQERLKQLHEEVNLLKSNIAKYKNALERRKNSKGQNKSSSSALTGVLSAKQVQDLLSEDHGCSLPATPQSISDLKSLATALLETIHEKNMVIQHQRQTNKILGNRVAELEKKLRTLEVSGLWSLPGLSYNVSIGFGSMFFLKYLCLWLIAVH</sequence>
<dbReference type="EMBL" id="BC120065">
    <property type="protein sequence ID" value="AAI20066.1"/>
    <property type="molecule type" value="mRNA"/>
</dbReference>
<dbReference type="SMR" id="Q0VCP9"/>
<dbReference type="STRING" id="9913.ENSBTAP00000069473"/>
<dbReference type="PaxDb" id="9913-ENSBTAP00000055855"/>
<dbReference type="eggNOG" id="KOG4687">
    <property type="taxonomic scope" value="Eukaryota"/>
</dbReference>
<dbReference type="HOGENOM" id="CLU_016190_0_0_1"/>
<dbReference type="InParanoid" id="Q0VCP9"/>
<dbReference type="OrthoDB" id="5917629at2759"/>
<dbReference type="Proteomes" id="UP000009136">
    <property type="component" value="Unplaced"/>
</dbReference>
<dbReference type="GO" id="GO:0016020">
    <property type="term" value="C:membrane"/>
    <property type="evidence" value="ECO:0007669"/>
    <property type="project" value="UniProtKB-SubCell"/>
</dbReference>
<dbReference type="Gene3D" id="1.10.287.1490">
    <property type="match status" value="1"/>
</dbReference>
<dbReference type="InterPro" id="IPR019179">
    <property type="entry name" value="Coiled-coil_dom-contain_pr_149"/>
</dbReference>
<dbReference type="PANTHER" id="PTHR21682">
    <property type="entry name" value="COILED-COIL DOMAIN-CONTAINING PROTEIN 149"/>
    <property type="match status" value="1"/>
</dbReference>
<dbReference type="PANTHER" id="PTHR21682:SF2">
    <property type="entry name" value="COILED-COIL DOMAIN-CONTAINING PROTEIN 149"/>
    <property type="match status" value="1"/>
</dbReference>
<dbReference type="Pfam" id="PF09789">
    <property type="entry name" value="CC149"/>
    <property type="match status" value="1"/>
</dbReference>
<accession>Q0VCP9</accession>
<organism>
    <name type="scientific">Bos taurus</name>
    <name type="common">Bovine</name>
    <dbReference type="NCBI Taxonomy" id="9913"/>
    <lineage>
        <taxon>Eukaryota</taxon>
        <taxon>Metazoa</taxon>
        <taxon>Chordata</taxon>
        <taxon>Craniata</taxon>
        <taxon>Vertebrata</taxon>
        <taxon>Euteleostomi</taxon>
        <taxon>Mammalia</taxon>
        <taxon>Eutheria</taxon>
        <taxon>Laurasiatheria</taxon>
        <taxon>Artiodactyla</taxon>
        <taxon>Ruminantia</taxon>
        <taxon>Pecora</taxon>
        <taxon>Bovidae</taxon>
        <taxon>Bovinae</taxon>
        <taxon>Bos</taxon>
    </lineage>
</organism>
<keyword id="KW-0175">Coiled coil</keyword>
<keyword id="KW-0472">Membrane</keyword>
<keyword id="KW-1185">Reference proteome</keyword>
<keyword id="KW-0812">Transmembrane</keyword>
<keyword id="KW-1133">Transmembrane helix</keyword>
<comment type="subcellular location">
    <subcellularLocation>
        <location evidence="2">Membrane</location>
        <topology evidence="2">Single-pass membrane protein</topology>
    </subcellularLocation>
</comment>
<comment type="similarity">
    <text evidence="2">Belongs to the CCDC149 family.</text>
</comment>
<gene>
    <name type="primary">CCDC149</name>
</gene>
<evidence type="ECO:0000255" key="1"/>
<evidence type="ECO:0000305" key="2"/>
<feature type="chain" id="PRO_0000344208" description="Coiled-coil domain-containing protein 149">
    <location>
        <begin position="1"/>
        <end position="319"/>
    </location>
</feature>
<feature type="transmembrane region" description="Helical" evidence="1">
    <location>
        <begin position="298"/>
        <end position="318"/>
    </location>
</feature>
<feature type="coiled-coil region" evidence="1">
    <location>
        <begin position="1"/>
        <end position="199"/>
    </location>
</feature>
<feature type="coiled-coil region" evidence="1">
    <location>
        <begin position="259"/>
        <end position="286"/>
    </location>
</feature>
<proteinExistence type="evidence at transcript level"/>
<protein>
    <recommendedName>
        <fullName>Coiled-coil domain-containing protein 149</fullName>
    </recommendedName>
</protein>
<name>CC149_BOVIN</name>